<proteinExistence type="evidence at protein level"/>
<sequence>MASSSILIPPILTRRNLLLSTTIATVTPPPPAKPPSPDITITDRVFLDFSLCPTYFRSDPSATLSSTTPCSDSTPLGRVVLGLYGRHVPITVSTFKRMCTSSSTSYKNTPVHKIFPGQYFLAGRQGGGRRDTAEVGYSLRDLPRNTDVVNSKAFLLPHARAGVVSLCLSENDDDDDIRLDPDYRNVEFLITTGPGPSPQLDGGNIVFGTVLEGLDVVTSISSIPTYKPSENIKQFNDFAEFLGDERAQNARSLWNRPLKTVFISGCGELKVTNPSLSPTLP</sequence>
<gene>
    <name type="primary">CYP28</name>
    <name type="ordered locus">At5g35100</name>
    <name type="ORF">F7N22.3</name>
</gene>
<accession>O65220</accession>
<accession>A8MQM4</accession>
<accession>Q8VXW1</accession>
<comment type="function">
    <text evidence="1">PPIases accelerate the folding of proteins. It catalyzes the cis-trans isomerization of proline imidic peptide bonds in oligopeptides (By similarity).</text>
</comment>
<comment type="catalytic activity">
    <reaction>
        <text>[protein]-peptidylproline (omega=180) = [protein]-peptidylproline (omega=0)</text>
        <dbReference type="Rhea" id="RHEA:16237"/>
        <dbReference type="Rhea" id="RHEA-COMP:10747"/>
        <dbReference type="Rhea" id="RHEA-COMP:10748"/>
        <dbReference type="ChEBI" id="CHEBI:83833"/>
        <dbReference type="ChEBI" id="CHEBI:83834"/>
        <dbReference type="EC" id="5.2.1.8"/>
    </reaction>
</comment>
<comment type="subcellular location">
    <subcellularLocation>
        <location evidence="3">Plastid</location>
        <location evidence="3">Chloroplast</location>
    </subcellularLocation>
</comment>
<comment type="alternative products">
    <event type="alternative splicing"/>
    <isoform>
        <id>O65220-1</id>
        <name>1</name>
        <sequence type="displayed"/>
    </isoform>
    <isoform>
        <id>O65220-2</id>
        <name>2</name>
        <sequence type="described" ref="VSP_055390"/>
    </isoform>
</comment>
<comment type="tissue specificity">
    <text evidence="4 5">Ubiquitous. Not detected in roots.</text>
</comment>
<comment type="induction">
    <text evidence="4">Down-regulated by dark and high CO(2) treatment.</text>
</comment>
<comment type="PTM">
    <text>S-nytrosylated during the hypersensitive disease resistance response.</text>
</comment>
<comment type="similarity">
    <text evidence="6">Belongs to the cyclophilin-type PPIase family.</text>
</comment>
<comment type="sequence caution" evidence="6">
    <conflict type="erroneous initiation">
        <sequence resource="EMBL-CDS" id="AAL67133"/>
    </conflict>
    <text>Extended N-terminus.</text>
</comment>
<name>CPY28_ARATH</name>
<protein>
    <recommendedName>
        <fullName>Peptidyl-prolyl cis-trans isomerase CYP28, chloroplastic</fullName>
        <shortName>PPIase CYP28</shortName>
        <ecNumber>5.2.1.8</ecNumber>
    </recommendedName>
    <alternativeName>
        <fullName>Cyclophilin of 28 kDa</fullName>
    </alternativeName>
    <alternativeName>
        <fullName>Cyclophilin-28</fullName>
    </alternativeName>
</protein>
<evidence type="ECO:0000250" key="1"/>
<evidence type="ECO:0000255" key="2">
    <source>
        <dbReference type="PROSITE-ProRule" id="PRU00156"/>
    </source>
</evidence>
<evidence type="ECO:0000269" key="3">
    <source>
    </source>
</evidence>
<evidence type="ECO:0000269" key="4">
    <source>
    </source>
</evidence>
<evidence type="ECO:0000269" key="5">
    <source>
    </source>
</evidence>
<evidence type="ECO:0000305" key="6"/>
<dbReference type="EC" id="5.2.1.8"/>
<dbReference type="EMBL" id="AP000421">
    <property type="protein sequence ID" value="BAB10017.1"/>
    <property type="molecule type" value="Genomic_DNA"/>
</dbReference>
<dbReference type="EMBL" id="AF058825">
    <property type="protein sequence ID" value="AAC13578.1"/>
    <property type="molecule type" value="Genomic_DNA"/>
</dbReference>
<dbReference type="EMBL" id="CP002688">
    <property type="protein sequence ID" value="AED93931.1"/>
    <property type="molecule type" value="Genomic_DNA"/>
</dbReference>
<dbReference type="EMBL" id="AY074520">
    <property type="protein sequence ID" value="AAL67133.1"/>
    <property type="status" value="ALT_INIT"/>
    <property type="molecule type" value="mRNA"/>
</dbReference>
<dbReference type="EMBL" id="BT015407">
    <property type="protein sequence ID" value="AAU05530.1"/>
    <property type="molecule type" value="mRNA"/>
</dbReference>
<dbReference type="PIR" id="T01157">
    <property type="entry name" value="T01157"/>
</dbReference>
<dbReference type="RefSeq" id="NP_001078636.1">
    <molecule id="O65220-2"/>
    <property type="nucleotide sequence ID" value="NM_001085167.1"/>
</dbReference>
<dbReference type="SMR" id="O65220"/>
<dbReference type="FunCoup" id="O65220">
    <property type="interactions" value="1106"/>
</dbReference>
<dbReference type="STRING" id="3702.O65220"/>
<dbReference type="PaxDb" id="3702-AT5G35100.1"/>
<dbReference type="ProteomicsDB" id="222672">
    <molecule id="O65220-1"/>
</dbReference>
<dbReference type="EnsemblPlants" id="AT5G35100.2">
    <molecule id="O65220-2"/>
    <property type="protein sequence ID" value="AT5G35100.2"/>
    <property type="gene ID" value="AT5G35100"/>
</dbReference>
<dbReference type="GeneID" id="833461"/>
<dbReference type="Gramene" id="AT5G35100.2">
    <molecule id="O65220-2"/>
    <property type="protein sequence ID" value="AT5G35100.2"/>
    <property type="gene ID" value="AT5G35100"/>
</dbReference>
<dbReference type="KEGG" id="ath:AT5G35100"/>
<dbReference type="Araport" id="AT5G35100"/>
<dbReference type="TAIR" id="AT5G35100"/>
<dbReference type="eggNOG" id="KOG0865">
    <property type="taxonomic scope" value="Eukaryota"/>
</dbReference>
<dbReference type="InParanoid" id="O65220"/>
<dbReference type="PRO" id="PR:O65220"/>
<dbReference type="Proteomes" id="UP000006548">
    <property type="component" value="Chromosome 5"/>
</dbReference>
<dbReference type="ExpressionAtlas" id="O65220">
    <property type="expression patterns" value="baseline and differential"/>
</dbReference>
<dbReference type="GO" id="GO:0009507">
    <property type="term" value="C:chloroplast"/>
    <property type="evidence" value="ECO:0007005"/>
    <property type="project" value="TAIR"/>
</dbReference>
<dbReference type="GO" id="GO:0009536">
    <property type="term" value="C:plastid"/>
    <property type="evidence" value="ECO:0007005"/>
    <property type="project" value="TAIR"/>
</dbReference>
<dbReference type="GO" id="GO:0031977">
    <property type="term" value="C:thylakoid lumen"/>
    <property type="evidence" value="ECO:0007005"/>
    <property type="project" value="TAIR"/>
</dbReference>
<dbReference type="GO" id="GO:0003755">
    <property type="term" value="F:peptidyl-prolyl cis-trans isomerase activity"/>
    <property type="evidence" value="ECO:0007669"/>
    <property type="project" value="UniProtKB-KW"/>
</dbReference>
<dbReference type="FunFam" id="2.40.100.10:FF:000037">
    <property type="entry name" value="Peptidyl-prolyl cis-trans isomerase"/>
    <property type="match status" value="1"/>
</dbReference>
<dbReference type="Gene3D" id="2.40.100.10">
    <property type="entry name" value="Cyclophilin-like"/>
    <property type="match status" value="1"/>
</dbReference>
<dbReference type="InterPro" id="IPR029000">
    <property type="entry name" value="Cyclophilin-like_dom_sf"/>
</dbReference>
<dbReference type="InterPro" id="IPR002130">
    <property type="entry name" value="Cyclophilin-type_PPIase_dom"/>
</dbReference>
<dbReference type="InterPro" id="IPR044178">
    <property type="entry name" value="CYP28-like"/>
</dbReference>
<dbReference type="PANTHER" id="PTHR47875">
    <property type="entry name" value="PEPTIDYL-PROLYL CIS-TRANS ISOMERASE CYP28, CHLOROPLASTIC"/>
    <property type="match status" value="1"/>
</dbReference>
<dbReference type="PANTHER" id="PTHR47875:SF1">
    <property type="entry name" value="PEPTIDYL-PROLYL CIS-TRANS ISOMERASE CYP28, CHLOROPLASTIC"/>
    <property type="match status" value="1"/>
</dbReference>
<dbReference type="Pfam" id="PF00160">
    <property type="entry name" value="Pro_isomerase"/>
    <property type="match status" value="1"/>
</dbReference>
<dbReference type="PRINTS" id="PR00153">
    <property type="entry name" value="CSAPPISMRASE"/>
</dbReference>
<dbReference type="SUPFAM" id="SSF50891">
    <property type="entry name" value="Cyclophilin-like"/>
    <property type="match status" value="1"/>
</dbReference>
<dbReference type="PROSITE" id="PS50072">
    <property type="entry name" value="CSA_PPIASE_2"/>
    <property type="match status" value="1"/>
</dbReference>
<keyword id="KW-0025">Alternative splicing</keyword>
<keyword id="KW-0143">Chaperone</keyword>
<keyword id="KW-0150">Chloroplast</keyword>
<keyword id="KW-0903">Direct protein sequencing</keyword>
<keyword id="KW-0413">Isomerase</keyword>
<keyword id="KW-0934">Plastid</keyword>
<keyword id="KW-1185">Reference proteome</keyword>
<keyword id="KW-0697">Rotamase</keyword>
<keyword id="KW-0809">Transit peptide</keyword>
<reference key="1">
    <citation type="submission" date="1999-09" db="EMBL/GenBank/DDBJ databases">
        <title>Structural analysis of Arabidopsis thaliana chromosome 5. XI.</title>
        <authorList>
            <person name="Kaneko T."/>
            <person name="Katoh T."/>
            <person name="Asamizu E."/>
            <person name="Sato S."/>
            <person name="Nakamura Y."/>
            <person name="Kotani H."/>
            <person name="Tabata S."/>
        </authorList>
    </citation>
    <scope>NUCLEOTIDE SEQUENCE [LARGE SCALE GENOMIC DNA]</scope>
    <source>
        <strain>cv. Columbia</strain>
    </source>
</reference>
<reference key="2">
    <citation type="journal article" date="2000" name="Nature">
        <title>Sequence and analysis of chromosome 5 of the plant Arabidopsis thaliana.</title>
        <authorList>
            <person name="Tabata S."/>
            <person name="Kaneko T."/>
            <person name="Nakamura Y."/>
            <person name="Kotani H."/>
            <person name="Kato T."/>
            <person name="Asamizu E."/>
            <person name="Miyajima N."/>
            <person name="Sasamoto S."/>
            <person name="Kimura T."/>
            <person name="Hosouchi T."/>
            <person name="Kawashima K."/>
            <person name="Kohara M."/>
            <person name="Matsumoto M."/>
            <person name="Matsuno A."/>
            <person name="Muraki A."/>
            <person name="Nakayama S."/>
            <person name="Nakazaki N."/>
            <person name="Naruo K."/>
            <person name="Okumura S."/>
            <person name="Shinpo S."/>
            <person name="Takeuchi C."/>
            <person name="Wada T."/>
            <person name="Watanabe A."/>
            <person name="Yamada M."/>
            <person name="Yasuda M."/>
            <person name="Sato S."/>
            <person name="de la Bastide M."/>
            <person name="Huang E."/>
            <person name="Spiegel L."/>
            <person name="Gnoj L."/>
            <person name="O'Shaughnessy A."/>
            <person name="Preston R."/>
            <person name="Habermann K."/>
            <person name="Murray J."/>
            <person name="Johnson D."/>
            <person name="Rohlfing T."/>
            <person name="Nelson J."/>
            <person name="Stoneking T."/>
            <person name="Pepin K."/>
            <person name="Spieth J."/>
            <person name="Sekhon M."/>
            <person name="Armstrong J."/>
            <person name="Becker M."/>
            <person name="Belter E."/>
            <person name="Cordum H."/>
            <person name="Cordes M."/>
            <person name="Courtney L."/>
            <person name="Courtney W."/>
            <person name="Dante M."/>
            <person name="Du H."/>
            <person name="Edwards J."/>
            <person name="Fryman J."/>
            <person name="Haakensen B."/>
            <person name="Lamar E."/>
            <person name="Latreille P."/>
            <person name="Leonard S."/>
            <person name="Meyer R."/>
            <person name="Mulvaney E."/>
            <person name="Ozersky P."/>
            <person name="Riley A."/>
            <person name="Strowmatt C."/>
            <person name="Wagner-McPherson C."/>
            <person name="Wollam A."/>
            <person name="Yoakum M."/>
            <person name="Bell M."/>
            <person name="Dedhia N."/>
            <person name="Parnell L."/>
            <person name="Shah R."/>
            <person name="Rodriguez M."/>
            <person name="Hoon See L."/>
            <person name="Vil D."/>
            <person name="Baker J."/>
            <person name="Kirchoff K."/>
            <person name="Toth K."/>
            <person name="King L."/>
            <person name="Bahret A."/>
            <person name="Miller B."/>
            <person name="Marra M.A."/>
            <person name="Martienssen R."/>
            <person name="McCombie W.R."/>
            <person name="Wilson R.K."/>
            <person name="Murphy G."/>
            <person name="Bancroft I."/>
            <person name="Volckaert G."/>
            <person name="Wambutt R."/>
            <person name="Duesterhoeft A."/>
            <person name="Stiekema W."/>
            <person name="Pohl T."/>
            <person name="Entian K.-D."/>
            <person name="Terryn N."/>
            <person name="Hartley N."/>
            <person name="Bent E."/>
            <person name="Johnson S."/>
            <person name="Langham S.-A."/>
            <person name="McCullagh B."/>
            <person name="Robben J."/>
            <person name="Grymonprez B."/>
            <person name="Zimmermann W."/>
            <person name="Ramsperger U."/>
            <person name="Wedler H."/>
            <person name="Balke K."/>
            <person name="Wedler E."/>
            <person name="Peters S."/>
            <person name="van Staveren M."/>
            <person name="Dirkse W."/>
            <person name="Mooijman P."/>
            <person name="Klein Lankhorst R."/>
            <person name="Weitzenegger T."/>
            <person name="Bothe G."/>
            <person name="Rose M."/>
            <person name="Hauf J."/>
            <person name="Berneiser S."/>
            <person name="Hempel S."/>
            <person name="Feldpausch M."/>
            <person name="Lamberth S."/>
            <person name="Villarroel R."/>
            <person name="Gielen J."/>
            <person name="Ardiles W."/>
            <person name="Bents O."/>
            <person name="Lemcke K."/>
            <person name="Kolesov G."/>
            <person name="Mayer K.F.X."/>
            <person name="Rudd S."/>
            <person name="Schoof H."/>
            <person name="Schueller C."/>
            <person name="Zaccaria P."/>
            <person name="Mewes H.-W."/>
            <person name="Bevan M."/>
            <person name="Fransz P.F."/>
        </authorList>
    </citation>
    <scope>NUCLEOTIDE SEQUENCE [LARGE SCALE GENOMIC DNA]</scope>
    <source>
        <strain>cv. Columbia</strain>
    </source>
</reference>
<reference key="3">
    <citation type="journal article" date="2017" name="Plant J.">
        <title>Araport11: a complete reannotation of the Arabidopsis thaliana reference genome.</title>
        <authorList>
            <person name="Cheng C.Y."/>
            <person name="Krishnakumar V."/>
            <person name="Chan A.P."/>
            <person name="Thibaud-Nissen F."/>
            <person name="Schobel S."/>
            <person name="Town C.D."/>
        </authorList>
    </citation>
    <scope>GENOME REANNOTATION</scope>
    <source>
        <strain>cv. Columbia</strain>
    </source>
</reference>
<reference key="4">
    <citation type="journal article" date="2003" name="Science">
        <title>Empirical analysis of transcriptional activity in the Arabidopsis genome.</title>
        <authorList>
            <person name="Yamada K."/>
            <person name="Lim J."/>
            <person name="Dale J.M."/>
            <person name="Chen H."/>
            <person name="Shinn P."/>
            <person name="Palm C.J."/>
            <person name="Southwick A.M."/>
            <person name="Wu H.C."/>
            <person name="Kim C.J."/>
            <person name="Nguyen M."/>
            <person name="Pham P.K."/>
            <person name="Cheuk R.F."/>
            <person name="Karlin-Newmann G."/>
            <person name="Liu S.X."/>
            <person name="Lam B."/>
            <person name="Sakano H."/>
            <person name="Wu T."/>
            <person name="Yu G."/>
            <person name="Miranda M."/>
            <person name="Quach H.L."/>
            <person name="Tripp M."/>
            <person name="Chang C.H."/>
            <person name="Lee J.M."/>
            <person name="Toriumi M.J."/>
            <person name="Chan M.M."/>
            <person name="Tang C.C."/>
            <person name="Onodera C.S."/>
            <person name="Deng J.M."/>
            <person name="Akiyama K."/>
            <person name="Ansari Y."/>
            <person name="Arakawa T."/>
            <person name="Banh J."/>
            <person name="Banno F."/>
            <person name="Bowser L."/>
            <person name="Brooks S.Y."/>
            <person name="Carninci P."/>
            <person name="Chao Q."/>
            <person name="Choy N."/>
            <person name="Enju A."/>
            <person name="Goldsmith A.D."/>
            <person name="Gurjal M."/>
            <person name="Hansen N.F."/>
            <person name="Hayashizaki Y."/>
            <person name="Johnson-Hopson C."/>
            <person name="Hsuan V.W."/>
            <person name="Iida K."/>
            <person name="Karnes M."/>
            <person name="Khan S."/>
            <person name="Koesema E."/>
            <person name="Ishida J."/>
            <person name="Jiang P.X."/>
            <person name="Jones T."/>
            <person name="Kawai J."/>
            <person name="Kamiya A."/>
            <person name="Meyers C."/>
            <person name="Nakajima M."/>
            <person name="Narusaka M."/>
            <person name="Seki M."/>
            <person name="Sakurai T."/>
            <person name="Satou M."/>
            <person name="Tamse R."/>
            <person name="Vaysberg M."/>
            <person name="Wallender E.K."/>
            <person name="Wong C."/>
            <person name="Yamamura Y."/>
            <person name="Yuan S."/>
            <person name="Shinozaki K."/>
            <person name="Davis R.W."/>
            <person name="Theologis A."/>
            <person name="Ecker J.R."/>
        </authorList>
    </citation>
    <scope>NUCLEOTIDE SEQUENCE [LARGE SCALE MRNA]</scope>
    <source>
        <strain>cv. Columbia</strain>
    </source>
</reference>
<reference key="5">
    <citation type="journal article" date="2002" name="J. Biol. Chem.">
        <title>Proteome map of the chloroplast lumen of Arabidopsis thaliana.</title>
        <authorList>
            <person name="Schubert M."/>
            <person name="Petersson U.A."/>
            <person name="Haas B.J."/>
            <person name="Funk C."/>
            <person name="Schroeder W.P."/>
            <person name="Kieselbach T."/>
        </authorList>
    </citation>
    <scope>PROTEIN SEQUENCE OF 25-44</scope>
    <scope>SUBCELLULAR LOCATION</scope>
</reference>
<reference key="6">
    <citation type="submission" date="2004-08" db="EMBL/GenBank/DDBJ databases">
        <title>Arabidopsis ORF clones.</title>
        <authorList>
            <person name="Cheuk R."/>
            <person name="Chen H."/>
            <person name="Kim C.J."/>
            <person name="Shinn P."/>
            <person name="Ecker J.R."/>
        </authorList>
    </citation>
    <scope>NUCLEOTIDE SEQUENCE [LARGE SCALE MRNA]</scope>
</reference>
<reference key="7">
    <citation type="journal article" date="2004" name="Plant Physiol.">
        <title>Immunophilins and parvulins. Superfamily of peptidyl prolyl isomerases in Arabidopsis.</title>
        <authorList>
            <person name="He Z."/>
            <person name="Li L."/>
            <person name="Luan S."/>
        </authorList>
    </citation>
    <scope>TISSUE SPECIFICITY</scope>
    <scope>GENE FAMILY</scope>
    <scope>NOMENCLATURE</scope>
    <scope>INDUCTION</scope>
</reference>
<reference key="8">
    <citation type="journal article" date="2004" name="Plant Physiol.">
        <title>The Arabidopsis cyclophilin gene family.</title>
        <authorList>
            <person name="Romano P.G.N."/>
            <person name="Horton P."/>
            <person name="Gray J.E."/>
        </authorList>
    </citation>
    <scope>TISSUE SPECIFICITY</scope>
    <scope>GENE FAMILY</scope>
    <scope>NOMENCLATURE</scope>
</reference>
<reference key="9">
    <citation type="journal article" date="2008" name="Proteomics">
        <title>Proteomic analysis of S-nitrosylated proteins in Arabidopsis thaliana undergoing hypersensitive response.</title>
        <authorList>
            <person name="Romero-Puertas M.C."/>
            <person name="Campostrini N."/>
            <person name="Matte A."/>
            <person name="Righetti P.G."/>
            <person name="Perazzolli M."/>
            <person name="Zolla L."/>
            <person name="Roepstorff P."/>
            <person name="Delledonne M."/>
        </authorList>
    </citation>
    <scope>IDENTIFICATION BY MASS SPECTROMETRY</scope>
    <scope>S-NYTROSYLATION</scope>
</reference>
<organism>
    <name type="scientific">Arabidopsis thaliana</name>
    <name type="common">Mouse-ear cress</name>
    <dbReference type="NCBI Taxonomy" id="3702"/>
    <lineage>
        <taxon>Eukaryota</taxon>
        <taxon>Viridiplantae</taxon>
        <taxon>Streptophyta</taxon>
        <taxon>Embryophyta</taxon>
        <taxon>Tracheophyta</taxon>
        <taxon>Spermatophyta</taxon>
        <taxon>Magnoliopsida</taxon>
        <taxon>eudicotyledons</taxon>
        <taxon>Gunneridae</taxon>
        <taxon>Pentapetalae</taxon>
        <taxon>rosids</taxon>
        <taxon>malvids</taxon>
        <taxon>Brassicales</taxon>
        <taxon>Brassicaceae</taxon>
        <taxon>Camelineae</taxon>
        <taxon>Arabidopsis</taxon>
    </lineage>
</organism>
<feature type="transit peptide" description="Chloroplast" evidence="3">
    <location>
        <begin position="1"/>
        <end position="24"/>
    </location>
</feature>
<feature type="chain" id="PRO_0000429941" description="Peptidyl-prolyl cis-trans isomerase CYP28, chloroplastic">
    <location>
        <begin position="25"/>
        <end position="281"/>
    </location>
</feature>
<feature type="domain" description="PPIase cyclophilin-type" evidence="2">
    <location>
        <begin position="66"/>
        <end position="268"/>
    </location>
</feature>
<feature type="splice variant" id="VSP_055390" description="In isoform 2." evidence="6">
    <location>
        <begin position="134"/>
        <end position="169"/>
    </location>
</feature>